<dbReference type="EC" id="2.7.11.-" evidence="1"/>
<dbReference type="EC" id="2.7.4.-" evidence="1"/>
<dbReference type="EMBL" id="AP009324">
    <property type="protein sequence ID" value="BAF77640.1"/>
    <property type="molecule type" value="Genomic_DNA"/>
</dbReference>
<dbReference type="RefSeq" id="WP_000958224.1">
    <property type="nucleotide sequence ID" value="NZ_CTYB01000002.1"/>
</dbReference>
<dbReference type="SMR" id="A7WZQ8"/>
<dbReference type="KEGG" id="saw:SAHV_0757"/>
<dbReference type="HOGENOM" id="CLU_052030_0_1_9"/>
<dbReference type="GO" id="GO:0005524">
    <property type="term" value="F:ATP binding"/>
    <property type="evidence" value="ECO:0007669"/>
    <property type="project" value="UniProtKB-UniRule"/>
</dbReference>
<dbReference type="GO" id="GO:0000287">
    <property type="term" value="F:magnesium ion binding"/>
    <property type="evidence" value="ECO:0007669"/>
    <property type="project" value="UniProtKB-UniRule"/>
</dbReference>
<dbReference type="GO" id="GO:0000155">
    <property type="term" value="F:phosphorelay sensor kinase activity"/>
    <property type="evidence" value="ECO:0007669"/>
    <property type="project" value="InterPro"/>
</dbReference>
<dbReference type="GO" id="GO:0004674">
    <property type="term" value="F:protein serine/threonine kinase activity"/>
    <property type="evidence" value="ECO:0007669"/>
    <property type="project" value="UniProtKB-KW"/>
</dbReference>
<dbReference type="GO" id="GO:0004712">
    <property type="term" value="F:protein serine/threonine/tyrosine kinase activity"/>
    <property type="evidence" value="ECO:0007669"/>
    <property type="project" value="UniProtKB-UniRule"/>
</dbReference>
<dbReference type="GO" id="GO:0006109">
    <property type="term" value="P:regulation of carbohydrate metabolic process"/>
    <property type="evidence" value="ECO:0007669"/>
    <property type="project" value="UniProtKB-UniRule"/>
</dbReference>
<dbReference type="CDD" id="cd01918">
    <property type="entry name" value="HprK_C"/>
    <property type="match status" value="1"/>
</dbReference>
<dbReference type="FunFam" id="3.40.1390.20:FF:000002">
    <property type="entry name" value="HPr kinase/phosphorylase"/>
    <property type="match status" value="1"/>
</dbReference>
<dbReference type="FunFam" id="3.40.50.300:FF:000174">
    <property type="entry name" value="HPr kinase/phosphorylase"/>
    <property type="match status" value="1"/>
</dbReference>
<dbReference type="Gene3D" id="3.40.1390.20">
    <property type="entry name" value="HprK N-terminal domain-like"/>
    <property type="match status" value="1"/>
</dbReference>
<dbReference type="Gene3D" id="3.40.50.300">
    <property type="entry name" value="P-loop containing nucleotide triphosphate hydrolases"/>
    <property type="match status" value="1"/>
</dbReference>
<dbReference type="HAMAP" id="MF_01249">
    <property type="entry name" value="HPr_kinase"/>
    <property type="match status" value="1"/>
</dbReference>
<dbReference type="InterPro" id="IPR003755">
    <property type="entry name" value="HPr(Ser)_kin/Pase"/>
</dbReference>
<dbReference type="InterPro" id="IPR011104">
    <property type="entry name" value="Hpr_kin/Pase_C"/>
</dbReference>
<dbReference type="InterPro" id="IPR011126">
    <property type="entry name" value="Hpr_kin/Pase_Hpr_N"/>
</dbReference>
<dbReference type="InterPro" id="IPR027417">
    <property type="entry name" value="P-loop_NTPase"/>
</dbReference>
<dbReference type="InterPro" id="IPR028979">
    <property type="entry name" value="Ser_kin/Pase_Hpr-like_N_sf"/>
</dbReference>
<dbReference type="NCBIfam" id="TIGR00679">
    <property type="entry name" value="hpr-ser"/>
    <property type="match status" value="1"/>
</dbReference>
<dbReference type="PANTHER" id="PTHR30305:SF1">
    <property type="entry name" value="HPR KINASE_PHOSPHORYLASE"/>
    <property type="match status" value="1"/>
</dbReference>
<dbReference type="PANTHER" id="PTHR30305">
    <property type="entry name" value="PROTEIN YJDM-RELATED"/>
    <property type="match status" value="1"/>
</dbReference>
<dbReference type="Pfam" id="PF07475">
    <property type="entry name" value="Hpr_kinase_C"/>
    <property type="match status" value="1"/>
</dbReference>
<dbReference type="Pfam" id="PF02603">
    <property type="entry name" value="Hpr_kinase_N"/>
    <property type="match status" value="1"/>
</dbReference>
<dbReference type="SUPFAM" id="SSF75138">
    <property type="entry name" value="HprK N-terminal domain-like"/>
    <property type="match status" value="1"/>
</dbReference>
<dbReference type="SUPFAM" id="SSF53795">
    <property type="entry name" value="PEP carboxykinase-like"/>
    <property type="match status" value="1"/>
</dbReference>
<evidence type="ECO:0000255" key="1">
    <source>
        <dbReference type="HAMAP-Rule" id="MF_01249"/>
    </source>
</evidence>
<sequence length="310" mass="34482">MLTTEKLVETLKLDLIAGEEGLSKPIKNADISRPGLEMAGYFSHYASDRIQLLGTTELSFYNLLPDKDRAGRMRKLCRPETPAIIVTRGLQPPEELVEAAKELNTPLIVAKDATTSLMSRLTTFLEHALAKTTSLHGVLVDVYGVGVLITGDSGIGKSETALELVKRGHRLVADDNVEIRQINKDELIGKPPKLIEHLLEIRGLGIINVMTLFGAGSILTEKRIRLNINLENWNKQKLYDRVGLNEETLSILDTEITKKTIPVRPGRNVAVIIEVAAMNYRLNIMGINTAEEFSERLNEEIIKNSHKSEE</sequence>
<comment type="function">
    <text evidence="1">Catalyzes the ATP- as well as the pyrophosphate-dependent phosphorylation of a specific serine residue in HPr, a phosphocarrier protein of the phosphoenolpyruvate-dependent sugar phosphotransferase system (PTS). HprK/P also catalyzes the pyrophosphate-producing, inorganic phosphate-dependent dephosphorylation (phosphorolysis) of seryl-phosphorylated HPr (P-Ser-HPr). The two antagonistic activities of HprK/P are regulated by several intracellular metabolites, which change their concentration in response to the absence or presence of rapidly metabolisable carbon sources (glucose, fructose, etc.) in the growth medium. Therefore, by controlling the phosphorylation state of HPr, HPrK/P is a sensor enzyme that plays a major role in the regulation of carbon metabolism and sugar transport: it mediates carbon catabolite repression (CCR), and regulates PTS-catalyzed carbohydrate uptake and inducer exclusion.</text>
</comment>
<comment type="catalytic activity">
    <reaction evidence="1">
        <text>[HPr protein]-L-serine + ATP = [HPr protein]-O-phospho-L-serine + ADP + H(+)</text>
        <dbReference type="Rhea" id="RHEA:46600"/>
        <dbReference type="Rhea" id="RHEA-COMP:11602"/>
        <dbReference type="Rhea" id="RHEA-COMP:11603"/>
        <dbReference type="ChEBI" id="CHEBI:15378"/>
        <dbReference type="ChEBI" id="CHEBI:29999"/>
        <dbReference type="ChEBI" id="CHEBI:30616"/>
        <dbReference type="ChEBI" id="CHEBI:83421"/>
        <dbReference type="ChEBI" id="CHEBI:456216"/>
    </reaction>
</comment>
<comment type="catalytic activity">
    <reaction evidence="1">
        <text>[HPr protein]-O-phospho-L-serine + phosphate + H(+) = [HPr protein]-L-serine + diphosphate</text>
        <dbReference type="Rhea" id="RHEA:46604"/>
        <dbReference type="Rhea" id="RHEA-COMP:11602"/>
        <dbReference type="Rhea" id="RHEA-COMP:11603"/>
        <dbReference type="ChEBI" id="CHEBI:15378"/>
        <dbReference type="ChEBI" id="CHEBI:29999"/>
        <dbReference type="ChEBI" id="CHEBI:33019"/>
        <dbReference type="ChEBI" id="CHEBI:43474"/>
        <dbReference type="ChEBI" id="CHEBI:83421"/>
    </reaction>
</comment>
<comment type="cofactor">
    <cofactor evidence="1">
        <name>Mg(2+)</name>
        <dbReference type="ChEBI" id="CHEBI:18420"/>
    </cofactor>
</comment>
<comment type="subunit">
    <text evidence="1">Homohexamer.</text>
</comment>
<comment type="domain">
    <text evidence="1">The Walker A ATP-binding motif also binds Pi and PPi.</text>
</comment>
<comment type="miscellaneous">
    <text evidence="1">Both phosphorylation and phosphorolysis are carried out by the same active site and suggest a common mechanism for both reactions.</text>
</comment>
<comment type="similarity">
    <text evidence="1">Belongs to the HPrK/P family.</text>
</comment>
<feature type="chain" id="PRO_1000067170" description="HPr kinase/phosphorylase">
    <location>
        <begin position="1"/>
        <end position="310"/>
    </location>
</feature>
<feature type="region of interest" description="Important for the catalytic mechanism of both phosphorylation and dephosphorylation" evidence="1">
    <location>
        <begin position="199"/>
        <end position="208"/>
    </location>
</feature>
<feature type="region of interest" description="Important for the catalytic mechanism of dephosphorylation" evidence="1">
    <location>
        <begin position="262"/>
        <end position="267"/>
    </location>
</feature>
<feature type="active site" evidence="1">
    <location>
        <position position="136"/>
    </location>
</feature>
<feature type="active site" evidence="1">
    <location>
        <position position="157"/>
    </location>
</feature>
<feature type="active site" description="Proton acceptor; for phosphorylation activity. Proton donor; for dephosphorylation activity" evidence="1">
    <location>
        <position position="175"/>
    </location>
</feature>
<feature type="active site" evidence="1">
    <location>
        <position position="241"/>
    </location>
</feature>
<feature type="binding site" evidence="1">
    <location>
        <begin position="151"/>
        <end position="158"/>
    </location>
    <ligand>
        <name>ATP</name>
        <dbReference type="ChEBI" id="CHEBI:30616"/>
    </ligand>
</feature>
<feature type="binding site" evidence="1">
    <location>
        <position position="158"/>
    </location>
    <ligand>
        <name>Mg(2+)</name>
        <dbReference type="ChEBI" id="CHEBI:18420"/>
    </ligand>
</feature>
<feature type="binding site" evidence="1">
    <location>
        <position position="200"/>
    </location>
    <ligand>
        <name>Mg(2+)</name>
        <dbReference type="ChEBI" id="CHEBI:18420"/>
    </ligand>
</feature>
<organism>
    <name type="scientific">Staphylococcus aureus (strain Mu3 / ATCC 700698)</name>
    <dbReference type="NCBI Taxonomy" id="418127"/>
    <lineage>
        <taxon>Bacteria</taxon>
        <taxon>Bacillati</taxon>
        <taxon>Bacillota</taxon>
        <taxon>Bacilli</taxon>
        <taxon>Bacillales</taxon>
        <taxon>Staphylococcaceae</taxon>
        <taxon>Staphylococcus</taxon>
    </lineage>
</organism>
<proteinExistence type="inferred from homology"/>
<protein>
    <recommendedName>
        <fullName evidence="1">HPr kinase/phosphorylase</fullName>
        <shortName evidence="1">HPrK/P</shortName>
        <ecNumber evidence="1">2.7.11.-</ecNumber>
        <ecNumber evidence="1">2.7.4.-</ecNumber>
    </recommendedName>
    <alternativeName>
        <fullName evidence="1">HPr(Ser) kinase/phosphorylase</fullName>
    </alternativeName>
</protein>
<reference key="1">
    <citation type="journal article" date="2008" name="Antimicrob. Agents Chemother.">
        <title>Mutated response regulator graR is responsible for phenotypic conversion of Staphylococcus aureus from heterogeneous vancomycin-intermediate resistance to vancomycin-intermediate resistance.</title>
        <authorList>
            <person name="Neoh H.-M."/>
            <person name="Cui L."/>
            <person name="Yuzawa H."/>
            <person name="Takeuchi F."/>
            <person name="Matsuo M."/>
            <person name="Hiramatsu K."/>
        </authorList>
    </citation>
    <scope>NUCLEOTIDE SEQUENCE [LARGE SCALE GENOMIC DNA]</scope>
    <source>
        <strain>Mu3 / ATCC 700698</strain>
    </source>
</reference>
<accession>A7WZQ8</accession>
<name>HPRK_STAA1</name>
<gene>
    <name evidence="1" type="primary">hprK</name>
    <name type="ordered locus">SAHV_0757</name>
</gene>
<keyword id="KW-0067">ATP-binding</keyword>
<keyword id="KW-0119">Carbohydrate metabolism</keyword>
<keyword id="KW-0418">Kinase</keyword>
<keyword id="KW-0460">Magnesium</keyword>
<keyword id="KW-0479">Metal-binding</keyword>
<keyword id="KW-0511">Multifunctional enzyme</keyword>
<keyword id="KW-0547">Nucleotide-binding</keyword>
<keyword id="KW-0723">Serine/threonine-protein kinase</keyword>
<keyword id="KW-0808">Transferase</keyword>